<feature type="chain" id="PRO_1000013120" description="Putative membrane protein insertion efficiency factor">
    <location>
        <begin position="1"/>
        <end position="73"/>
    </location>
</feature>
<proteinExistence type="inferred from homology"/>
<accession>A8GX83</accession>
<gene>
    <name type="ordered locus">A1I_05805</name>
</gene>
<comment type="function">
    <text evidence="1">Could be involved in insertion of integral membrane proteins into the membrane.</text>
</comment>
<comment type="subcellular location">
    <subcellularLocation>
        <location evidence="1">Cell inner membrane</location>
        <topology evidence="1">Peripheral membrane protein</topology>
        <orientation evidence="1">Cytoplasmic side</orientation>
    </subcellularLocation>
</comment>
<comment type="similarity">
    <text evidence="1">Belongs to the UPF0161 family.</text>
</comment>
<evidence type="ECO:0000255" key="1">
    <source>
        <dbReference type="HAMAP-Rule" id="MF_00386"/>
    </source>
</evidence>
<sequence length="73" mass="8340">MTRILLLLLTFYRYFISPLLGGNNCRFYPTCSKYAKEALNTHGGIKGLWLIFKRIIKCQPLCDGGYDPVPPTK</sequence>
<name>YIDD_RICB8</name>
<organism>
    <name type="scientific">Rickettsia bellii (strain OSU 85-389)</name>
    <dbReference type="NCBI Taxonomy" id="391896"/>
    <lineage>
        <taxon>Bacteria</taxon>
        <taxon>Pseudomonadati</taxon>
        <taxon>Pseudomonadota</taxon>
        <taxon>Alphaproteobacteria</taxon>
        <taxon>Rickettsiales</taxon>
        <taxon>Rickettsiaceae</taxon>
        <taxon>Rickettsieae</taxon>
        <taxon>Rickettsia</taxon>
        <taxon>belli group</taxon>
    </lineage>
</organism>
<keyword id="KW-0997">Cell inner membrane</keyword>
<keyword id="KW-1003">Cell membrane</keyword>
<keyword id="KW-0472">Membrane</keyword>
<dbReference type="EMBL" id="CP000849">
    <property type="protein sequence ID" value="ABV79483.1"/>
    <property type="molecule type" value="Genomic_DNA"/>
</dbReference>
<dbReference type="KEGG" id="rbo:A1I_05805"/>
<dbReference type="HOGENOM" id="CLU_144811_6_0_5"/>
<dbReference type="GO" id="GO:0005886">
    <property type="term" value="C:plasma membrane"/>
    <property type="evidence" value="ECO:0007669"/>
    <property type="project" value="UniProtKB-SubCell"/>
</dbReference>
<dbReference type="HAMAP" id="MF_00386">
    <property type="entry name" value="UPF0161_YidD"/>
    <property type="match status" value="1"/>
</dbReference>
<dbReference type="InterPro" id="IPR002696">
    <property type="entry name" value="Membr_insert_effic_factor_YidD"/>
</dbReference>
<dbReference type="NCBIfam" id="TIGR00278">
    <property type="entry name" value="membrane protein insertion efficiency factor YidD"/>
    <property type="match status" value="1"/>
</dbReference>
<dbReference type="PANTHER" id="PTHR33383">
    <property type="entry name" value="MEMBRANE PROTEIN INSERTION EFFICIENCY FACTOR-RELATED"/>
    <property type="match status" value="1"/>
</dbReference>
<dbReference type="PANTHER" id="PTHR33383:SF1">
    <property type="entry name" value="MEMBRANE PROTEIN INSERTION EFFICIENCY FACTOR-RELATED"/>
    <property type="match status" value="1"/>
</dbReference>
<dbReference type="Pfam" id="PF01809">
    <property type="entry name" value="YidD"/>
    <property type="match status" value="1"/>
</dbReference>
<dbReference type="SMART" id="SM01234">
    <property type="entry name" value="Haemolytic"/>
    <property type="match status" value="1"/>
</dbReference>
<protein>
    <recommendedName>
        <fullName evidence="1">Putative membrane protein insertion efficiency factor</fullName>
    </recommendedName>
</protein>
<reference key="1">
    <citation type="submission" date="2007-09" db="EMBL/GenBank/DDBJ databases">
        <title>Complete genome sequencing of Rickettsia bellii.</title>
        <authorList>
            <person name="Madan A."/>
            <person name="Lee H."/>
            <person name="Madan A."/>
            <person name="Yoon J.-G."/>
            <person name="Ryu G.-Y."/>
            <person name="Dasch G."/>
            <person name="Ereemeva M."/>
        </authorList>
    </citation>
    <scope>NUCLEOTIDE SEQUENCE [LARGE SCALE GENOMIC DNA]</scope>
    <source>
        <strain>OSU 85-389</strain>
    </source>
</reference>